<protein>
    <recommendedName>
        <fullName>Protein MxiG</fullName>
    </recommendedName>
</protein>
<sequence>MSEAKNSNLAPFRLLVKLTNGVGDEFPLYYGNNLIVLGRTIETLEFGNDNFPENIIPVTDSKSDGIIYLTISKDNICQFSDEKGEQIDINSQFNSFEYDGISFHLKNMREDKSRGHILNGMYKNHSVFFFFAVIVVLIIIFSLSLKKDEVKEIAEIIDDKRYGIVNTGQCNYILAETQNDAVWASVALNKTGFTKCRYILVSNKEINRIQQYINQRFPFINLYVLNLVSDKAELLVFLSKERNSSKDTELDKLKNALIVEFPYIKNIKFNYLSDHNARGDAKGIFTKVNVQYKEICENNKVTYSVREELTDEKLELINRLISEHKNIYGDQYIEFSVLLIDDDFKGKSYLNSKDSYVMLNDKHWFFLDKNK</sequence>
<organism>
    <name type="scientific">Shigella flexneri</name>
    <dbReference type="NCBI Taxonomy" id="623"/>
    <lineage>
        <taxon>Bacteria</taxon>
        <taxon>Pseudomonadati</taxon>
        <taxon>Pseudomonadota</taxon>
        <taxon>Gammaproteobacteria</taxon>
        <taxon>Enterobacterales</taxon>
        <taxon>Enterobacteriaceae</taxon>
        <taxon>Shigella</taxon>
    </lineage>
</organism>
<comment type="function">
    <text evidence="2">Involved in the secretion of the Ipa antigens. Involved in the intracellular dissemination of Shigella. Part of the Mxi-Spa secretion apparatus.</text>
</comment>
<comment type="subcellular location">
    <subcellularLocation>
        <location evidence="2">Cell inner membrane</location>
        <topology evidence="2">Single-pass type II membrane protein</topology>
    </subcellularLocation>
    <subcellularLocation>
        <location evidence="2">Cell outer membrane</location>
        <topology evidence="2">Single-pass type II membrane protein</topology>
    </subcellularLocation>
</comment>
<comment type="disruption phenotype">
    <text evidence="2">Loss of secretion of Ipa antigens, and thus unable to enter HeLa cells.</text>
</comment>
<proteinExistence type="evidence at protein level"/>
<gene>
    <name type="primary">mxiG</name>
    <name type="ordered locus">CP0136</name>
</gene>
<dbReference type="EMBL" id="Z48957">
    <property type="protein sequence ID" value="CAA88822.1"/>
    <property type="molecule type" value="Genomic_DNA"/>
</dbReference>
<dbReference type="EMBL" id="AL391753">
    <property type="protein sequence ID" value="CAC05811.1"/>
    <property type="molecule type" value="Genomic_DNA"/>
</dbReference>
<dbReference type="EMBL" id="AF348706">
    <property type="protein sequence ID" value="AAK18455.1"/>
    <property type="molecule type" value="Genomic_DNA"/>
</dbReference>
<dbReference type="EMBL" id="AF386526">
    <property type="protein sequence ID" value="AAL72329.1"/>
    <property type="molecule type" value="Genomic_DNA"/>
</dbReference>
<dbReference type="PIR" id="S70728">
    <property type="entry name" value="S70728"/>
</dbReference>
<dbReference type="RefSeq" id="NP_085299.1">
    <property type="nucleotide sequence ID" value="NC_002698.1"/>
</dbReference>
<dbReference type="RefSeq" id="NP_858269.1">
    <property type="nucleotide sequence ID" value="NC_004851.1"/>
</dbReference>
<dbReference type="RefSeq" id="WP_001287353.1">
    <property type="nucleotide sequence ID" value="NZ_WPGS01000043.1"/>
</dbReference>
<dbReference type="RefSeq" id="YP_009062493.1">
    <property type="nucleotide sequence ID" value="NC_024996.1"/>
</dbReference>
<dbReference type="PDB" id="2XXS">
    <property type="method" value="NMR"/>
    <property type="chains" value="A=6-112"/>
</dbReference>
<dbReference type="PDB" id="4A4Y">
    <property type="method" value="X-ray"/>
    <property type="resolution" value="1.57 A"/>
    <property type="chains" value="A=1-126"/>
</dbReference>
<dbReference type="PDB" id="6RWK">
    <property type="method" value="EM"/>
    <property type="resolution" value="3.86 A"/>
    <property type="chains" value="A/B/D/E/G/H/J/K/M/N/P/Q/S/T/U/V=1-371"/>
</dbReference>
<dbReference type="PDB" id="6RWX">
    <property type="method" value="EM"/>
    <property type="resolution" value="3.55 A"/>
    <property type="chains" value="A/B/C/D/E/F/G/H/I/J/K/L/M/N/O/P/Q/R/S/T/U/V/W/X=1-371"/>
</dbReference>
<dbReference type="PDB" id="8AXN">
    <property type="method" value="EM"/>
    <property type="resolution" value="3.34 A"/>
    <property type="chains" value="A/B/C/D/E/F/G/H/I/J/K/L/M/N/O/P/Q/R/S/T/U/V/W/X=1-371"/>
</dbReference>
<dbReference type="PDBsum" id="2XXS"/>
<dbReference type="PDBsum" id="4A4Y"/>
<dbReference type="PDBsum" id="6RWK"/>
<dbReference type="PDBsum" id="6RWX"/>
<dbReference type="PDBsum" id="8AXN"/>
<dbReference type="BMRB" id="P0A221"/>
<dbReference type="EMDB" id="EMD-10040"/>
<dbReference type="EMDB" id="EMD-10045"/>
<dbReference type="EMDB" id="EMD-15702"/>
<dbReference type="EMDB" id="EMD-15703"/>
<dbReference type="SMR" id="P0A221"/>
<dbReference type="IntAct" id="P0A221">
    <property type="interactions" value="2"/>
</dbReference>
<dbReference type="PaxDb" id="198214-CP0136"/>
<dbReference type="GeneID" id="1238032"/>
<dbReference type="KEGG" id="sfl:CP0136"/>
<dbReference type="PATRIC" id="fig|198214.7.peg.5389"/>
<dbReference type="HOGENOM" id="CLU_745759_0_0_6"/>
<dbReference type="EvolutionaryTrace" id="P0A221"/>
<dbReference type="Proteomes" id="UP000001006">
    <property type="component" value="Plasmid pCP301"/>
</dbReference>
<dbReference type="GO" id="GO:0009279">
    <property type="term" value="C:cell outer membrane"/>
    <property type="evidence" value="ECO:0007669"/>
    <property type="project" value="UniProtKB-SubCell"/>
</dbReference>
<dbReference type="GO" id="GO:0005886">
    <property type="term" value="C:plasma membrane"/>
    <property type="evidence" value="ECO:0007669"/>
    <property type="project" value="UniProtKB-SubCell"/>
</dbReference>
<dbReference type="Gene3D" id="2.60.200.50">
    <property type="match status" value="1"/>
</dbReference>
<dbReference type="Gene3D" id="3.30.300.170">
    <property type="match status" value="1"/>
</dbReference>
<dbReference type="Gene3D" id="3.30.70.1770">
    <property type="match status" value="1"/>
</dbReference>
<dbReference type="InterPro" id="IPR019029">
    <property type="entry name" value="T3SS_PrgH/EprH-like"/>
</dbReference>
<dbReference type="Pfam" id="PF09480">
    <property type="entry name" value="PrgH"/>
    <property type="match status" value="1"/>
</dbReference>
<geneLocation type="plasmid">
    <name>pWR100</name>
</geneLocation>
<geneLocation type="plasmid">
    <name>pWR501</name>
</geneLocation>
<geneLocation type="plasmid">
    <name>pCP301</name>
</geneLocation>
<accession>P0A221</accession>
<accession>Q57332</accession>
<keyword id="KW-0002">3D-structure</keyword>
<keyword id="KW-0997">Cell inner membrane</keyword>
<keyword id="KW-1003">Cell membrane</keyword>
<keyword id="KW-0998">Cell outer membrane</keyword>
<keyword id="KW-0472">Membrane</keyword>
<keyword id="KW-0614">Plasmid</keyword>
<keyword id="KW-1185">Reference proteome</keyword>
<keyword id="KW-0812">Transmembrane</keyword>
<keyword id="KW-1133">Transmembrane helix</keyword>
<keyword id="KW-0843">Virulence</keyword>
<name>MXIG_SHIFL</name>
<evidence type="ECO:0000255" key="1"/>
<evidence type="ECO:0000269" key="2">
    <source>
    </source>
</evidence>
<evidence type="ECO:0007829" key="3">
    <source>
        <dbReference type="PDB" id="2XXS"/>
    </source>
</evidence>
<evidence type="ECO:0007829" key="4">
    <source>
        <dbReference type="PDB" id="4A4Y"/>
    </source>
</evidence>
<feature type="chain" id="PRO_0000096657" description="Protein MxiG">
    <location>
        <begin position="1"/>
        <end position="371"/>
    </location>
</feature>
<feature type="transmembrane region" description="Helical" evidence="1">
    <location>
        <begin position="127"/>
        <end position="141"/>
    </location>
</feature>
<feature type="mutagenesis site" description="Defective in intercellular dispersion, however secretes Ipa proteins and enters HeLa cells normally." evidence="2">
    <original>G</original>
    <variation>A</variation>
    <location>
        <position position="279"/>
    </location>
</feature>
<feature type="strand" evidence="4">
    <location>
        <begin position="9"/>
        <end position="17"/>
    </location>
</feature>
<feature type="strand" evidence="4">
    <location>
        <begin position="23"/>
        <end position="37"/>
    </location>
</feature>
<feature type="helix" evidence="4">
    <location>
        <begin position="38"/>
        <end position="43"/>
    </location>
</feature>
<feature type="strand" evidence="4">
    <location>
        <begin position="53"/>
        <end position="58"/>
    </location>
</feature>
<feature type="strand" evidence="4">
    <location>
        <begin position="65"/>
        <end position="71"/>
    </location>
</feature>
<feature type="turn" evidence="3">
    <location>
        <begin position="73"/>
        <end position="75"/>
    </location>
</feature>
<feature type="strand" evidence="4">
    <location>
        <begin position="77"/>
        <end position="80"/>
    </location>
</feature>
<feature type="turn" evidence="3">
    <location>
        <begin position="82"/>
        <end position="84"/>
    </location>
</feature>
<feature type="strand" evidence="4">
    <location>
        <begin position="91"/>
        <end position="98"/>
    </location>
</feature>
<feature type="strand" evidence="4">
    <location>
        <begin position="101"/>
        <end position="107"/>
    </location>
</feature>
<feature type="strand" evidence="4">
    <location>
        <begin position="116"/>
        <end position="118"/>
    </location>
</feature>
<feature type="strand" evidence="4">
    <location>
        <begin position="121"/>
        <end position="123"/>
    </location>
</feature>
<reference key="1">
    <citation type="journal article" date="1995" name="Mol. Microbiol.">
        <title>MxiG, a membrane protein required for secretion of Shigella spp. Ipa invasins: involvement in entry into epithelial cells and in intercellular dissemination.</title>
        <authorList>
            <person name="Allaoui A."/>
            <person name="Sansonetti P.J."/>
            <person name="Menard R."/>
            <person name="Barzu S."/>
            <person name="Mounier J."/>
            <person name="Phalipon A."/>
            <person name="Parsot C."/>
        </authorList>
    </citation>
    <scope>NUCLEOTIDE SEQUENCE [GENOMIC DNA]</scope>
    <scope>FUNCTION</scope>
    <scope>SUBCELLULAR LOCATION</scope>
    <scope>DISRUPTION PHENOTYPE</scope>
    <scope>MUTAGENESIS OF GLY-279</scope>
    <source>
        <strain>M90T / Serotype 5a</strain>
        <plasmid>pWR100</plasmid>
    </source>
</reference>
<reference key="2">
    <citation type="journal article" date="2000" name="Mol. Microbiol.">
        <title>The virulence plasmid pWR100 and the repertoire of proteins secreted by the type III secretion apparatus of Shigella flexneri.</title>
        <authorList>
            <person name="Buchrieser C."/>
            <person name="Glaser P."/>
            <person name="Rusniok C."/>
            <person name="Nedjari H."/>
            <person name="d'Hauteville H."/>
            <person name="Kunst F."/>
            <person name="Sansonetti P.J."/>
            <person name="Parsot C."/>
        </authorList>
    </citation>
    <scope>NUCLEOTIDE SEQUENCE [GENOMIC DNA]</scope>
    <source>
        <strain>M90T / Serotype 5a</strain>
        <plasmid>pWR100</plasmid>
    </source>
</reference>
<reference key="3">
    <citation type="journal article" date="2001" name="Infect. Immun.">
        <title>Complete DNA sequence and analysis of the large virulence plasmid of Shigella flexneri.</title>
        <authorList>
            <person name="Venkatesan M.M."/>
            <person name="Goldberg M.B."/>
            <person name="Rose D.J."/>
            <person name="Grotbeck E.J."/>
            <person name="Burland V."/>
            <person name="Blattner F.R."/>
        </authorList>
    </citation>
    <scope>NUCLEOTIDE SEQUENCE [GENOMIC DNA]</scope>
    <source>
        <strain>M90T / Serotype 5a</strain>
        <plasmid>pWR501</plasmid>
    </source>
</reference>
<reference key="4">
    <citation type="journal article" date="2002" name="Nucleic Acids Res.">
        <title>Genome sequence of Shigella flexneri 2a: insights into pathogenicity through comparison with genomes of Escherichia coli K12 and O157.</title>
        <authorList>
            <person name="Jin Q."/>
            <person name="Yuan Z."/>
            <person name="Xu J."/>
            <person name="Wang Y."/>
            <person name="Shen Y."/>
            <person name="Lu W."/>
            <person name="Wang J."/>
            <person name="Liu H."/>
            <person name="Yang J."/>
            <person name="Yang F."/>
            <person name="Zhang X."/>
            <person name="Zhang J."/>
            <person name="Yang G."/>
            <person name="Wu H."/>
            <person name="Qu D."/>
            <person name="Dong J."/>
            <person name="Sun L."/>
            <person name="Xue Y."/>
            <person name="Zhao A."/>
            <person name="Gao Y."/>
            <person name="Zhu J."/>
            <person name="Kan B."/>
            <person name="Ding K."/>
            <person name="Chen S."/>
            <person name="Cheng H."/>
            <person name="Yao Z."/>
            <person name="He B."/>
            <person name="Chen R."/>
            <person name="Ma D."/>
            <person name="Qiang B."/>
            <person name="Wen Y."/>
            <person name="Hou Y."/>
            <person name="Yu J."/>
        </authorList>
    </citation>
    <scope>NUCLEOTIDE SEQUENCE [LARGE SCALE GENOMIC DNA]</scope>
    <source>
        <strain>301 / Serotype 2a</strain>
        <plasmid>pCP301</plasmid>
    </source>
</reference>